<name>NADK_HYDCU</name>
<gene>
    <name evidence="1" type="primary">nadK</name>
    <name type="ordered locus">Tcr_0867</name>
</gene>
<proteinExistence type="inferred from homology"/>
<keyword id="KW-0067">ATP-binding</keyword>
<keyword id="KW-0963">Cytoplasm</keyword>
<keyword id="KW-0418">Kinase</keyword>
<keyword id="KW-0520">NAD</keyword>
<keyword id="KW-0521">NADP</keyword>
<keyword id="KW-0547">Nucleotide-binding</keyword>
<keyword id="KW-0808">Transferase</keyword>
<dbReference type="EC" id="2.7.1.23" evidence="1"/>
<dbReference type="EMBL" id="CP000109">
    <property type="protein sequence ID" value="ABB41463.1"/>
    <property type="molecule type" value="Genomic_DNA"/>
</dbReference>
<dbReference type="SMR" id="Q31HB0"/>
<dbReference type="STRING" id="317025.Tcr_0867"/>
<dbReference type="KEGG" id="tcx:Tcr_0867"/>
<dbReference type="eggNOG" id="COG0061">
    <property type="taxonomic scope" value="Bacteria"/>
</dbReference>
<dbReference type="HOGENOM" id="CLU_008831_0_1_6"/>
<dbReference type="OrthoDB" id="9774737at2"/>
<dbReference type="GO" id="GO:0005737">
    <property type="term" value="C:cytoplasm"/>
    <property type="evidence" value="ECO:0007669"/>
    <property type="project" value="UniProtKB-SubCell"/>
</dbReference>
<dbReference type="GO" id="GO:0005524">
    <property type="term" value="F:ATP binding"/>
    <property type="evidence" value="ECO:0007669"/>
    <property type="project" value="UniProtKB-KW"/>
</dbReference>
<dbReference type="GO" id="GO:0046872">
    <property type="term" value="F:metal ion binding"/>
    <property type="evidence" value="ECO:0007669"/>
    <property type="project" value="UniProtKB-UniRule"/>
</dbReference>
<dbReference type="GO" id="GO:0051287">
    <property type="term" value="F:NAD binding"/>
    <property type="evidence" value="ECO:0007669"/>
    <property type="project" value="UniProtKB-ARBA"/>
</dbReference>
<dbReference type="GO" id="GO:0003951">
    <property type="term" value="F:NAD+ kinase activity"/>
    <property type="evidence" value="ECO:0007669"/>
    <property type="project" value="UniProtKB-UniRule"/>
</dbReference>
<dbReference type="GO" id="GO:0019674">
    <property type="term" value="P:NAD metabolic process"/>
    <property type="evidence" value="ECO:0007669"/>
    <property type="project" value="InterPro"/>
</dbReference>
<dbReference type="GO" id="GO:0006741">
    <property type="term" value="P:NADP biosynthetic process"/>
    <property type="evidence" value="ECO:0007669"/>
    <property type="project" value="UniProtKB-UniRule"/>
</dbReference>
<dbReference type="Gene3D" id="3.40.50.10330">
    <property type="entry name" value="Probable inorganic polyphosphate/atp-NAD kinase, domain 1"/>
    <property type="match status" value="1"/>
</dbReference>
<dbReference type="Gene3D" id="2.60.200.30">
    <property type="entry name" value="Probable inorganic polyphosphate/atp-NAD kinase, domain 2"/>
    <property type="match status" value="1"/>
</dbReference>
<dbReference type="HAMAP" id="MF_00361">
    <property type="entry name" value="NAD_kinase"/>
    <property type="match status" value="1"/>
</dbReference>
<dbReference type="InterPro" id="IPR017438">
    <property type="entry name" value="ATP-NAD_kinase_N"/>
</dbReference>
<dbReference type="InterPro" id="IPR017437">
    <property type="entry name" value="ATP-NAD_kinase_PpnK-typ_C"/>
</dbReference>
<dbReference type="InterPro" id="IPR016064">
    <property type="entry name" value="NAD/diacylglycerol_kinase_sf"/>
</dbReference>
<dbReference type="InterPro" id="IPR002504">
    <property type="entry name" value="NADK"/>
</dbReference>
<dbReference type="NCBIfam" id="NF002306">
    <property type="entry name" value="PRK01231.1"/>
    <property type="match status" value="1"/>
</dbReference>
<dbReference type="PANTHER" id="PTHR20275">
    <property type="entry name" value="NAD KINASE"/>
    <property type="match status" value="1"/>
</dbReference>
<dbReference type="PANTHER" id="PTHR20275:SF0">
    <property type="entry name" value="NAD KINASE"/>
    <property type="match status" value="1"/>
</dbReference>
<dbReference type="Pfam" id="PF01513">
    <property type="entry name" value="NAD_kinase"/>
    <property type="match status" value="1"/>
</dbReference>
<dbReference type="Pfam" id="PF20143">
    <property type="entry name" value="NAD_kinase_C"/>
    <property type="match status" value="1"/>
</dbReference>
<dbReference type="SUPFAM" id="SSF111331">
    <property type="entry name" value="NAD kinase/diacylglycerol kinase-like"/>
    <property type="match status" value="1"/>
</dbReference>
<reference key="1">
    <citation type="journal article" date="2006" name="PLoS Biol.">
        <title>The genome of deep-sea vent chemolithoautotroph Thiomicrospira crunogena XCL-2.</title>
        <authorList>
            <person name="Scott K.M."/>
            <person name="Sievert S.M."/>
            <person name="Abril F.N."/>
            <person name="Ball L.A."/>
            <person name="Barrett C.J."/>
            <person name="Blake R.A."/>
            <person name="Boller A.J."/>
            <person name="Chain P.S.G."/>
            <person name="Clark J.A."/>
            <person name="Davis C.R."/>
            <person name="Detter C."/>
            <person name="Do K.F."/>
            <person name="Dobrinski K.P."/>
            <person name="Faza B.I."/>
            <person name="Fitzpatrick K.A."/>
            <person name="Freyermuth S.K."/>
            <person name="Harmer T.L."/>
            <person name="Hauser L.J."/>
            <person name="Huegler M."/>
            <person name="Kerfeld C.A."/>
            <person name="Klotz M.G."/>
            <person name="Kong W.W."/>
            <person name="Land M."/>
            <person name="Lapidus A."/>
            <person name="Larimer F.W."/>
            <person name="Longo D.L."/>
            <person name="Lucas S."/>
            <person name="Malfatti S.A."/>
            <person name="Massey S.E."/>
            <person name="Martin D.D."/>
            <person name="McCuddin Z."/>
            <person name="Meyer F."/>
            <person name="Moore J.L."/>
            <person name="Ocampo L.H. Jr."/>
            <person name="Paul J.H."/>
            <person name="Paulsen I.T."/>
            <person name="Reep D.K."/>
            <person name="Ren Q."/>
            <person name="Ross R.L."/>
            <person name="Sato P.Y."/>
            <person name="Thomas P."/>
            <person name="Tinkham L.E."/>
            <person name="Zeruth G.T."/>
        </authorList>
    </citation>
    <scope>NUCLEOTIDE SEQUENCE [LARGE SCALE GENOMIC DNA]</scope>
    <source>
        <strain>DSM 25203 / XCL-2</strain>
    </source>
</reference>
<sequence>MFNKIGIFGKYSGIQSWDLIDKLILYFQKKKKTVILDQRSCADFPIERYGIERLERDALMKEIDFAVVVGGDGTFLDVARCIVDYNIPILGVNLGRLGFLADVSPDTMMVTLDEVLADDYTCEERTLLHVLIKKDGETLFDEVAFNDVVLHKNDSPRMIEFETFVDNRFLNSQRSDGLIIATPTGSTAYSLSAGGPIVDPGLNAMTLVSINPHTMSNRPVVVSGDSEILIRPHDNCSGTASIICDGQLTFQIEAKHETYVTRHPNFIKMVHPKNHDHYELLRAKLNWGQKL</sequence>
<protein>
    <recommendedName>
        <fullName evidence="1">NAD kinase</fullName>
        <ecNumber evidence="1">2.7.1.23</ecNumber>
    </recommendedName>
    <alternativeName>
        <fullName evidence="1">ATP-dependent NAD kinase</fullName>
    </alternativeName>
</protein>
<organism>
    <name type="scientific">Hydrogenovibrio crunogenus (strain DSM 25203 / XCL-2)</name>
    <name type="common">Thiomicrospira crunogena</name>
    <dbReference type="NCBI Taxonomy" id="317025"/>
    <lineage>
        <taxon>Bacteria</taxon>
        <taxon>Pseudomonadati</taxon>
        <taxon>Pseudomonadota</taxon>
        <taxon>Gammaproteobacteria</taxon>
        <taxon>Thiotrichales</taxon>
        <taxon>Piscirickettsiaceae</taxon>
        <taxon>Hydrogenovibrio</taxon>
    </lineage>
</organism>
<accession>Q31HB0</accession>
<evidence type="ECO:0000255" key="1">
    <source>
        <dbReference type="HAMAP-Rule" id="MF_00361"/>
    </source>
</evidence>
<feature type="chain" id="PRO_0000229707" description="NAD kinase">
    <location>
        <begin position="1"/>
        <end position="291"/>
    </location>
</feature>
<feature type="active site" description="Proton acceptor" evidence="1">
    <location>
        <position position="72"/>
    </location>
</feature>
<feature type="binding site" evidence="1">
    <location>
        <begin position="72"/>
        <end position="73"/>
    </location>
    <ligand>
        <name>NAD(+)</name>
        <dbReference type="ChEBI" id="CHEBI:57540"/>
    </ligand>
</feature>
<feature type="binding site" evidence="1">
    <location>
        <begin position="146"/>
        <end position="147"/>
    </location>
    <ligand>
        <name>NAD(+)</name>
        <dbReference type="ChEBI" id="CHEBI:57540"/>
    </ligand>
</feature>
<feature type="binding site" evidence="1">
    <location>
        <position position="157"/>
    </location>
    <ligand>
        <name>NAD(+)</name>
        <dbReference type="ChEBI" id="CHEBI:57540"/>
    </ligand>
</feature>
<feature type="binding site" evidence="1">
    <location>
        <position position="174"/>
    </location>
    <ligand>
        <name>NAD(+)</name>
        <dbReference type="ChEBI" id="CHEBI:57540"/>
    </ligand>
</feature>
<feature type="binding site" evidence="1">
    <location>
        <position position="176"/>
    </location>
    <ligand>
        <name>NAD(+)</name>
        <dbReference type="ChEBI" id="CHEBI:57540"/>
    </ligand>
</feature>
<feature type="binding site" evidence="1">
    <location>
        <begin position="187"/>
        <end position="192"/>
    </location>
    <ligand>
        <name>NAD(+)</name>
        <dbReference type="ChEBI" id="CHEBI:57540"/>
    </ligand>
</feature>
<feature type="binding site" evidence="1">
    <location>
        <position position="247"/>
    </location>
    <ligand>
        <name>NAD(+)</name>
        <dbReference type="ChEBI" id="CHEBI:57540"/>
    </ligand>
</feature>
<comment type="function">
    <text evidence="1">Involved in the regulation of the intracellular balance of NAD and NADP, and is a key enzyme in the biosynthesis of NADP. Catalyzes specifically the phosphorylation on 2'-hydroxyl of the adenosine moiety of NAD to yield NADP.</text>
</comment>
<comment type="catalytic activity">
    <reaction evidence="1">
        <text>NAD(+) + ATP = ADP + NADP(+) + H(+)</text>
        <dbReference type="Rhea" id="RHEA:18629"/>
        <dbReference type="ChEBI" id="CHEBI:15378"/>
        <dbReference type="ChEBI" id="CHEBI:30616"/>
        <dbReference type="ChEBI" id="CHEBI:57540"/>
        <dbReference type="ChEBI" id="CHEBI:58349"/>
        <dbReference type="ChEBI" id="CHEBI:456216"/>
        <dbReference type="EC" id="2.7.1.23"/>
    </reaction>
</comment>
<comment type="cofactor">
    <cofactor evidence="1">
        <name>a divalent metal cation</name>
        <dbReference type="ChEBI" id="CHEBI:60240"/>
    </cofactor>
</comment>
<comment type="subcellular location">
    <subcellularLocation>
        <location evidence="1">Cytoplasm</location>
    </subcellularLocation>
</comment>
<comment type="similarity">
    <text evidence="1">Belongs to the NAD kinase family.</text>
</comment>